<accession>P0ACR6</accession>
<accession>P32484</accession>
<gene>
    <name type="primary">yeiE</name>
    <name type="ordered locus">Z3414</name>
    <name type="ordered locus">ECs3049</name>
</gene>
<protein>
    <recommendedName>
        <fullName>Uncharacterized HTH-type transcriptional regulator YeiE</fullName>
    </recommendedName>
</protein>
<sequence>MHITLRQLEVFAEVLKSGSTTQASVMLALSQSAVSAALTDLEGQLGVQLFDRVGKRLVVNEHGRLLYPRALALLEQAVEIEQLFREDNGAIRIYASSTIGNYILPAVIARYRHDYPQLPIELSVGNSQDVMQAVLDFRVDIGFIEGPCHSTEIISEPWLEDELVVFAAPTSPLARGPVTLEQLAAAPWILRERGSGTREIVDYLLLSHLPKFEMAMELGNSEAIKHAVRHGLGISCLSRRVIEDQLQAGTLSEVAVPLPRLMRTLWRIHHRQKHLSNALRRFLDYCDPANVPR</sequence>
<comment type="similarity">
    <text evidence="2">Belongs to the LysR transcriptional regulatory family.</text>
</comment>
<proteinExistence type="inferred from homology"/>
<reference key="1">
    <citation type="journal article" date="2001" name="Nature">
        <title>Genome sequence of enterohaemorrhagic Escherichia coli O157:H7.</title>
        <authorList>
            <person name="Perna N.T."/>
            <person name="Plunkett G. III"/>
            <person name="Burland V."/>
            <person name="Mau B."/>
            <person name="Glasner J.D."/>
            <person name="Rose D.J."/>
            <person name="Mayhew G.F."/>
            <person name="Evans P.S."/>
            <person name="Gregor J."/>
            <person name="Kirkpatrick H.A."/>
            <person name="Posfai G."/>
            <person name="Hackett J."/>
            <person name="Klink S."/>
            <person name="Boutin A."/>
            <person name="Shao Y."/>
            <person name="Miller L."/>
            <person name="Grotbeck E.J."/>
            <person name="Davis N.W."/>
            <person name="Lim A."/>
            <person name="Dimalanta E.T."/>
            <person name="Potamousis K."/>
            <person name="Apodaca J."/>
            <person name="Anantharaman T.S."/>
            <person name="Lin J."/>
            <person name="Yen G."/>
            <person name="Schwartz D.C."/>
            <person name="Welch R.A."/>
            <person name="Blattner F.R."/>
        </authorList>
    </citation>
    <scope>NUCLEOTIDE SEQUENCE [LARGE SCALE GENOMIC DNA]</scope>
    <source>
        <strain>O157:H7 / EDL933 / ATCC 700927 / EHEC</strain>
    </source>
</reference>
<reference key="2">
    <citation type="journal article" date="2001" name="DNA Res.">
        <title>Complete genome sequence of enterohemorrhagic Escherichia coli O157:H7 and genomic comparison with a laboratory strain K-12.</title>
        <authorList>
            <person name="Hayashi T."/>
            <person name="Makino K."/>
            <person name="Ohnishi M."/>
            <person name="Kurokawa K."/>
            <person name="Ishii K."/>
            <person name="Yokoyama K."/>
            <person name="Han C.-G."/>
            <person name="Ohtsubo E."/>
            <person name="Nakayama K."/>
            <person name="Murata T."/>
            <person name="Tanaka M."/>
            <person name="Tobe T."/>
            <person name="Iida T."/>
            <person name="Takami H."/>
            <person name="Honda T."/>
            <person name="Sasakawa C."/>
            <person name="Ogasawara N."/>
            <person name="Yasunaga T."/>
            <person name="Kuhara S."/>
            <person name="Shiba T."/>
            <person name="Hattori M."/>
            <person name="Shinagawa H."/>
        </authorList>
    </citation>
    <scope>NUCLEOTIDE SEQUENCE [LARGE SCALE GENOMIC DNA]</scope>
    <source>
        <strain>O157:H7 / Sakai / RIMD 0509952 / EHEC</strain>
    </source>
</reference>
<organism>
    <name type="scientific">Escherichia coli O157:H7</name>
    <dbReference type="NCBI Taxonomy" id="83334"/>
    <lineage>
        <taxon>Bacteria</taxon>
        <taxon>Pseudomonadati</taxon>
        <taxon>Pseudomonadota</taxon>
        <taxon>Gammaproteobacteria</taxon>
        <taxon>Enterobacterales</taxon>
        <taxon>Enterobacteriaceae</taxon>
        <taxon>Escherichia</taxon>
    </lineage>
</organism>
<name>YEIE_ECO57</name>
<evidence type="ECO:0000255" key="1">
    <source>
        <dbReference type="PROSITE-ProRule" id="PRU00253"/>
    </source>
</evidence>
<evidence type="ECO:0000305" key="2"/>
<feature type="chain" id="PRO_0000105789" description="Uncharacterized HTH-type transcriptional regulator YeiE">
    <location>
        <begin position="1"/>
        <end position="293"/>
    </location>
</feature>
<feature type="domain" description="HTH lysR-type" evidence="1">
    <location>
        <begin position="1"/>
        <end position="60"/>
    </location>
</feature>
<feature type="DNA-binding region" description="H-T-H motif" evidence="1">
    <location>
        <begin position="20"/>
        <end position="39"/>
    </location>
</feature>
<dbReference type="EMBL" id="AE005174">
    <property type="protein sequence ID" value="AAG57295.1"/>
    <property type="molecule type" value="Genomic_DNA"/>
</dbReference>
<dbReference type="EMBL" id="BA000007">
    <property type="protein sequence ID" value="BAB36472.1"/>
    <property type="molecule type" value="Genomic_DNA"/>
</dbReference>
<dbReference type="PIR" id="A98010">
    <property type="entry name" value="A98010"/>
</dbReference>
<dbReference type="PIR" id="C85854">
    <property type="entry name" value="C85854"/>
</dbReference>
<dbReference type="RefSeq" id="NP_311076.1">
    <property type="nucleotide sequence ID" value="NC_002695.1"/>
</dbReference>
<dbReference type="SMR" id="P0ACR6"/>
<dbReference type="STRING" id="155864.Z3414"/>
<dbReference type="GeneID" id="916753"/>
<dbReference type="KEGG" id="ece:Z3414"/>
<dbReference type="KEGG" id="ecs:ECs_3049"/>
<dbReference type="PATRIC" id="fig|386585.9.peg.3178"/>
<dbReference type="eggNOG" id="COG0583">
    <property type="taxonomic scope" value="Bacteria"/>
</dbReference>
<dbReference type="HOGENOM" id="CLU_039613_6_1_6"/>
<dbReference type="OMA" id="MHNSEEI"/>
<dbReference type="Proteomes" id="UP000000558">
    <property type="component" value="Chromosome"/>
</dbReference>
<dbReference type="Proteomes" id="UP000002519">
    <property type="component" value="Chromosome"/>
</dbReference>
<dbReference type="GO" id="GO:0003700">
    <property type="term" value="F:DNA-binding transcription factor activity"/>
    <property type="evidence" value="ECO:0007669"/>
    <property type="project" value="InterPro"/>
</dbReference>
<dbReference type="GO" id="GO:0000976">
    <property type="term" value="F:transcription cis-regulatory region binding"/>
    <property type="evidence" value="ECO:0007669"/>
    <property type="project" value="TreeGrafter"/>
</dbReference>
<dbReference type="CDD" id="cd08420">
    <property type="entry name" value="PBP2_CysL_like"/>
    <property type="match status" value="1"/>
</dbReference>
<dbReference type="FunFam" id="1.10.10.10:FF:000145">
    <property type="entry name" value="LysR family transcriptional regulator"/>
    <property type="match status" value="1"/>
</dbReference>
<dbReference type="FunFam" id="3.40.190.290:FF:000009">
    <property type="entry name" value="LysR family transcriptional regulator"/>
    <property type="match status" value="1"/>
</dbReference>
<dbReference type="Gene3D" id="3.40.190.290">
    <property type="match status" value="1"/>
</dbReference>
<dbReference type="Gene3D" id="1.10.10.10">
    <property type="entry name" value="Winged helix-like DNA-binding domain superfamily/Winged helix DNA-binding domain"/>
    <property type="match status" value="1"/>
</dbReference>
<dbReference type="InterPro" id="IPR005119">
    <property type="entry name" value="LysR_subst-bd"/>
</dbReference>
<dbReference type="InterPro" id="IPR000847">
    <property type="entry name" value="Tscrpt_reg_HTH_LysR"/>
</dbReference>
<dbReference type="InterPro" id="IPR036388">
    <property type="entry name" value="WH-like_DNA-bd_sf"/>
</dbReference>
<dbReference type="InterPro" id="IPR036390">
    <property type="entry name" value="WH_DNA-bd_sf"/>
</dbReference>
<dbReference type="InterPro" id="IPR049752">
    <property type="entry name" value="YeiE"/>
</dbReference>
<dbReference type="NCBIfam" id="NF008095">
    <property type="entry name" value="PRK10837.1"/>
    <property type="match status" value="1"/>
</dbReference>
<dbReference type="NCBIfam" id="NF040889">
    <property type="entry name" value="trans_reg_YeiE"/>
    <property type="match status" value="1"/>
</dbReference>
<dbReference type="PANTHER" id="PTHR30126">
    <property type="entry name" value="HTH-TYPE TRANSCRIPTIONAL REGULATOR"/>
    <property type="match status" value="1"/>
</dbReference>
<dbReference type="PANTHER" id="PTHR30126:SF94">
    <property type="entry name" value="LYSR FAMILY TRANSCRIPTIONAL REGULATOR"/>
    <property type="match status" value="1"/>
</dbReference>
<dbReference type="Pfam" id="PF00126">
    <property type="entry name" value="HTH_1"/>
    <property type="match status" value="1"/>
</dbReference>
<dbReference type="Pfam" id="PF03466">
    <property type="entry name" value="LysR_substrate"/>
    <property type="match status" value="1"/>
</dbReference>
<dbReference type="PRINTS" id="PR00039">
    <property type="entry name" value="HTHLYSR"/>
</dbReference>
<dbReference type="SUPFAM" id="SSF53850">
    <property type="entry name" value="Periplasmic binding protein-like II"/>
    <property type="match status" value="1"/>
</dbReference>
<dbReference type="SUPFAM" id="SSF46785">
    <property type="entry name" value="Winged helix' DNA-binding domain"/>
    <property type="match status" value="1"/>
</dbReference>
<dbReference type="PROSITE" id="PS50931">
    <property type="entry name" value="HTH_LYSR"/>
    <property type="match status" value="1"/>
</dbReference>
<keyword id="KW-0238">DNA-binding</keyword>
<keyword id="KW-1185">Reference proteome</keyword>
<keyword id="KW-0804">Transcription</keyword>
<keyword id="KW-0805">Transcription regulation</keyword>